<proteinExistence type="inferred from homology"/>
<sequence length="384" mass="41953">MAKHLFTSESVSEGHPDKIADQISDAVLDAILQQDPKARVACETYVKTGMVLVGGEITTSAWVDIEEITRNTVREIGYVHSDMGFDANSCAVLSAIGKQSPDINQGVDRADPLEQGAGDQGLMFGYATNETDVLMPAPITYAHRLVQRQAEVRKNGTLPWLRPDAKSQVTFQYDDGKIVGIDAVVLSTQHAEDIDQKSLQEAVMEEIIKPILPSEWLNTSTKFFINPTGRFVIGGPMGDCGLTGRKIIVDTYGGMARHGGGAFSGKDPSKVDRSAAYAARYVAKNIVAAGLADRCEIQVSYAIGVAEPTSIMVETFGTEKVPAEQLILLVREFFDLRPYGLIQMLDLLHPIYKETAAYGHFGRENFPWEKTDKAQLLRDAAGLK</sequence>
<organism>
    <name type="scientific">Salmonella typhimurium (strain LT2 / SGSC1412 / ATCC 700720)</name>
    <dbReference type="NCBI Taxonomy" id="99287"/>
    <lineage>
        <taxon>Bacteria</taxon>
        <taxon>Pseudomonadati</taxon>
        <taxon>Pseudomonadota</taxon>
        <taxon>Gammaproteobacteria</taxon>
        <taxon>Enterobacterales</taxon>
        <taxon>Enterobacteriaceae</taxon>
        <taxon>Salmonella</taxon>
    </lineage>
</organism>
<gene>
    <name evidence="2" type="primary">metK</name>
    <name type="ordered locus">STM3090</name>
</gene>
<comment type="function">
    <text evidence="2">Catalyzes the formation of S-adenosylmethionine (AdoMet) from methionine and ATP. The overall synthetic reaction is composed of two sequential steps, AdoMet formation and the subsequent tripolyphosphate hydrolysis which occurs prior to release of AdoMet from the enzyme.</text>
</comment>
<comment type="catalytic activity">
    <reaction evidence="2">
        <text>L-methionine + ATP + H2O = S-adenosyl-L-methionine + phosphate + diphosphate</text>
        <dbReference type="Rhea" id="RHEA:21080"/>
        <dbReference type="ChEBI" id="CHEBI:15377"/>
        <dbReference type="ChEBI" id="CHEBI:30616"/>
        <dbReference type="ChEBI" id="CHEBI:33019"/>
        <dbReference type="ChEBI" id="CHEBI:43474"/>
        <dbReference type="ChEBI" id="CHEBI:57844"/>
        <dbReference type="ChEBI" id="CHEBI:59789"/>
        <dbReference type="EC" id="2.5.1.6"/>
    </reaction>
</comment>
<comment type="cofactor">
    <cofactor evidence="2">
        <name>Mg(2+)</name>
        <dbReference type="ChEBI" id="CHEBI:18420"/>
    </cofactor>
    <text evidence="2">Binds 2 divalent ions per subunit.</text>
</comment>
<comment type="cofactor">
    <cofactor evidence="2">
        <name>K(+)</name>
        <dbReference type="ChEBI" id="CHEBI:29103"/>
    </cofactor>
    <text evidence="2">Binds 1 potassium ion per subunit.</text>
</comment>
<comment type="pathway">
    <text evidence="2">Amino-acid biosynthesis; S-adenosyl-L-methionine biosynthesis; S-adenosyl-L-methionine from L-methionine: step 1/1.</text>
</comment>
<comment type="subunit">
    <text evidence="2">Homotetramer; dimer of dimers.</text>
</comment>
<comment type="subcellular location">
    <subcellularLocation>
        <location evidence="2">Cytoplasm</location>
    </subcellularLocation>
</comment>
<comment type="similarity">
    <text evidence="2">Belongs to the AdoMet synthase family.</text>
</comment>
<feature type="initiator methionine" description="Removed" evidence="1">
    <location>
        <position position="1"/>
    </location>
</feature>
<feature type="chain" id="PRO_0000174582" description="S-adenosylmethionine synthase">
    <location>
        <begin position="2"/>
        <end position="384"/>
    </location>
</feature>
<feature type="region of interest" description="Flexible loop" evidence="2">
    <location>
        <begin position="99"/>
        <end position="109"/>
    </location>
</feature>
<feature type="binding site" description="in other chain" evidence="2">
    <location>
        <position position="15"/>
    </location>
    <ligand>
        <name>ATP</name>
        <dbReference type="ChEBI" id="CHEBI:30616"/>
        <note>ligand shared between two neighboring subunits</note>
    </ligand>
</feature>
<feature type="binding site" evidence="2">
    <location>
        <position position="17"/>
    </location>
    <ligand>
        <name>Mg(2+)</name>
        <dbReference type="ChEBI" id="CHEBI:18420"/>
    </ligand>
</feature>
<feature type="binding site" evidence="2">
    <location>
        <position position="43"/>
    </location>
    <ligand>
        <name>K(+)</name>
        <dbReference type="ChEBI" id="CHEBI:29103"/>
    </ligand>
</feature>
<feature type="binding site" description="in other chain" evidence="2">
    <location>
        <position position="56"/>
    </location>
    <ligand>
        <name>L-methionine</name>
        <dbReference type="ChEBI" id="CHEBI:57844"/>
        <note>ligand shared between two neighboring subunits</note>
    </ligand>
</feature>
<feature type="binding site" description="in other chain" evidence="2">
    <location>
        <position position="99"/>
    </location>
    <ligand>
        <name>L-methionine</name>
        <dbReference type="ChEBI" id="CHEBI:57844"/>
        <note>ligand shared between two neighboring subunits</note>
    </ligand>
</feature>
<feature type="binding site" description="in other chain" evidence="2">
    <location>
        <begin position="164"/>
        <end position="166"/>
    </location>
    <ligand>
        <name>ATP</name>
        <dbReference type="ChEBI" id="CHEBI:30616"/>
        <note>ligand shared between two neighboring subunits</note>
    </ligand>
</feature>
<feature type="binding site" description="in other chain" evidence="2">
    <location>
        <begin position="230"/>
        <end position="231"/>
    </location>
    <ligand>
        <name>ATP</name>
        <dbReference type="ChEBI" id="CHEBI:30616"/>
        <note>ligand shared between two neighboring subunits</note>
    </ligand>
</feature>
<feature type="binding site" evidence="2">
    <location>
        <position position="239"/>
    </location>
    <ligand>
        <name>ATP</name>
        <dbReference type="ChEBI" id="CHEBI:30616"/>
        <note>ligand shared between two neighboring subunits</note>
    </ligand>
</feature>
<feature type="binding site" evidence="2">
    <location>
        <position position="239"/>
    </location>
    <ligand>
        <name>L-methionine</name>
        <dbReference type="ChEBI" id="CHEBI:57844"/>
        <note>ligand shared between two neighboring subunits</note>
    </ligand>
</feature>
<feature type="binding site" description="in other chain" evidence="2">
    <location>
        <begin position="245"/>
        <end position="246"/>
    </location>
    <ligand>
        <name>ATP</name>
        <dbReference type="ChEBI" id="CHEBI:30616"/>
        <note>ligand shared between two neighboring subunits</note>
    </ligand>
</feature>
<feature type="binding site" evidence="2">
    <location>
        <position position="262"/>
    </location>
    <ligand>
        <name>ATP</name>
        <dbReference type="ChEBI" id="CHEBI:30616"/>
        <note>ligand shared between two neighboring subunits</note>
    </ligand>
</feature>
<feature type="binding site" evidence="2">
    <location>
        <position position="266"/>
    </location>
    <ligand>
        <name>ATP</name>
        <dbReference type="ChEBI" id="CHEBI:30616"/>
        <note>ligand shared between two neighboring subunits</note>
    </ligand>
</feature>
<feature type="binding site" description="in other chain" evidence="2">
    <location>
        <position position="270"/>
    </location>
    <ligand>
        <name>L-methionine</name>
        <dbReference type="ChEBI" id="CHEBI:57844"/>
        <note>ligand shared between two neighboring subunits</note>
    </ligand>
</feature>
<dbReference type="EC" id="2.5.1.6" evidence="2"/>
<dbReference type="EMBL" id="AE006468">
    <property type="protein sequence ID" value="AAL21965.1"/>
    <property type="molecule type" value="Genomic_DNA"/>
</dbReference>
<dbReference type="RefSeq" id="NP_462006.1">
    <property type="nucleotide sequence ID" value="NC_003197.2"/>
</dbReference>
<dbReference type="RefSeq" id="WP_001062140.1">
    <property type="nucleotide sequence ID" value="NC_003197.2"/>
</dbReference>
<dbReference type="SMR" id="P66764"/>
<dbReference type="STRING" id="99287.STM3090"/>
<dbReference type="PaxDb" id="99287-STM3090"/>
<dbReference type="GeneID" id="1254613"/>
<dbReference type="KEGG" id="stm:STM3090"/>
<dbReference type="PATRIC" id="fig|99287.12.peg.3274"/>
<dbReference type="HOGENOM" id="CLU_041802_1_1_6"/>
<dbReference type="OMA" id="ASYMARY"/>
<dbReference type="PhylomeDB" id="P66764"/>
<dbReference type="BioCyc" id="SENT99287:STM3090-MONOMER"/>
<dbReference type="UniPathway" id="UPA00315">
    <property type="reaction ID" value="UER00080"/>
</dbReference>
<dbReference type="Proteomes" id="UP000001014">
    <property type="component" value="Chromosome"/>
</dbReference>
<dbReference type="GO" id="GO:0005829">
    <property type="term" value="C:cytosol"/>
    <property type="evidence" value="ECO:0000318"/>
    <property type="project" value="GO_Central"/>
</dbReference>
<dbReference type="GO" id="GO:0005524">
    <property type="term" value="F:ATP binding"/>
    <property type="evidence" value="ECO:0007669"/>
    <property type="project" value="UniProtKB-UniRule"/>
</dbReference>
<dbReference type="GO" id="GO:0000287">
    <property type="term" value="F:magnesium ion binding"/>
    <property type="evidence" value="ECO:0007669"/>
    <property type="project" value="UniProtKB-UniRule"/>
</dbReference>
<dbReference type="GO" id="GO:0004478">
    <property type="term" value="F:methionine adenosyltransferase activity"/>
    <property type="evidence" value="ECO:0000318"/>
    <property type="project" value="GO_Central"/>
</dbReference>
<dbReference type="GO" id="GO:0006730">
    <property type="term" value="P:one-carbon metabolic process"/>
    <property type="evidence" value="ECO:0007669"/>
    <property type="project" value="UniProtKB-KW"/>
</dbReference>
<dbReference type="GO" id="GO:0006556">
    <property type="term" value="P:S-adenosylmethionine biosynthetic process"/>
    <property type="evidence" value="ECO:0000318"/>
    <property type="project" value="GO_Central"/>
</dbReference>
<dbReference type="CDD" id="cd18079">
    <property type="entry name" value="S-AdoMet_synt"/>
    <property type="match status" value="1"/>
</dbReference>
<dbReference type="FunFam" id="3.30.300.10:FF:000001">
    <property type="entry name" value="S-adenosylmethionine synthase"/>
    <property type="match status" value="1"/>
</dbReference>
<dbReference type="FunFam" id="3.30.300.10:FF:000003">
    <property type="entry name" value="S-adenosylmethionine synthase"/>
    <property type="match status" value="1"/>
</dbReference>
<dbReference type="Gene3D" id="3.30.300.10">
    <property type="match status" value="3"/>
</dbReference>
<dbReference type="HAMAP" id="MF_00086">
    <property type="entry name" value="S_AdoMet_synth1"/>
    <property type="match status" value="1"/>
</dbReference>
<dbReference type="InterPro" id="IPR022631">
    <property type="entry name" value="ADOMET_SYNTHASE_CS"/>
</dbReference>
<dbReference type="InterPro" id="IPR022630">
    <property type="entry name" value="S-AdoMet_synt_C"/>
</dbReference>
<dbReference type="InterPro" id="IPR022629">
    <property type="entry name" value="S-AdoMet_synt_central"/>
</dbReference>
<dbReference type="InterPro" id="IPR022628">
    <property type="entry name" value="S-AdoMet_synt_N"/>
</dbReference>
<dbReference type="InterPro" id="IPR002133">
    <property type="entry name" value="S-AdoMet_synthetase"/>
</dbReference>
<dbReference type="InterPro" id="IPR022636">
    <property type="entry name" value="S-AdoMet_synthetase_sfam"/>
</dbReference>
<dbReference type="NCBIfam" id="TIGR01034">
    <property type="entry name" value="metK"/>
    <property type="match status" value="1"/>
</dbReference>
<dbReference type="PANTHER" id="PTHR11964">
    <property type="entry name" value="S-ADENOSYLMETHIONINE SYNTHETASE"/>
    <property type="match status" value="1"/>
</dbReference>
<dbReference type="Pfam" id="PF02773">
    <property type="entry name" value="S-AdoMet_synt_C"/>
    <property type="match status" value="1"/>
</dbReference>
<dbReference type="Pfam" id="PF02772">
    <property type="entry name" value="S-AdoMet_synt_M"/>
    <property type="match status" value="1"/>
</dbReference>
<dbReference type="Pfam" id="PF00438">
    <property type="entry name" value="S-AdoMet_synt_N"/>
    <property type="match status" value="1"/>
</dbReference>
<dbReference type="PIRSF" id="PIRSF000497">
    <property type="entry name" value="MAT"/>
    <property type="match status" value="1"/>
</dbReference>
<dbReference type="SUPFAM" id="SSF55973">
    <property type="entry name" value="S-adenosylmethionine synthetase"/>
    <property type="match status" value="3"/>
</dbReference>
<dbReference type="PROSITE" id="PS00376">
    <property type="entry name" value="ADOMET_SYNTHASE_1"/>
    <property type="match status" value="1"/>
</dbReference>
<dbReference type="PROSITE" id="PS00377">
    <property type="entry name" value="ADOMET_SYNTHASE_2"/>
    <property type="match status" value="1"/>
</dbReference>
<accession>P66764</accession>
<accession>Q8XF85</accession>
<name>METK_SALTY</name>
<keyword id="KW-0067">ATP-binding</keyword>
<keyword id="KW-0963">Cytoplasm</keyword>
<keyword id="KW-0460">Magnesium</keyword>
<keyword id="KW-0479">Metal-binding</keyword>
<keyword id="KW-0547">Nucleotide-binding</keyword>
<keyword id="KW-0554">One-carbon metabolism</keyword>
<keyword id="KW-0630">Potassium</keyword>
<keyword id="KW-1185">Reference proteome</keyword>
<keyword id="KW-0808">Transferase</keyword>
<evidence type="ECO:0000250" key="1"/>
<evidence type="ECO:0000255" key="2">
    <source>
        <dbReference type="HAMAP-Rule" id="MF_00086"/>
    </source>
</evidence>
<reference key="1">
    <citation type="journal article" date="2001" name="Nature">
        <title>Complete genome sequence of Salmonella enterica serovar Typhimurium LT2.</title>
        <authorList>
            <person name="McClelland M."/>
            <person name="Sanderson K.E."/>
            <person name="Spieth J."/>
            <person name="Clifton S.W."/>
            <person name="Latreille P."/>
            <person name="Courtney L."/>
            <person name="Porwollik S."/>
            <person name="Ali J."/>
            <person name="Dante M."/>
            <person name="Du F."/>
            <person name="Hou S."/>
            <person name="Layman D."/>
            <person name="Leonard S."/>
            <person name="Nguyen C."/>
            <person name="Scott K."/>
            <person name="Holmes A."/>
            <person name="Grewal N."/>
            <person name="Mulvaney E."/>
            <person name="Ryan E."/>
            <person name="Sun H."/>
            <person name="Florea L."/>
            <person name="Miller W."/>
            <person name="Stoneking T."/>
            <person name="Nhan M."/>
            <person name="Waterston R."/>
            <person name="Wilson R.K."/>
        </authorList>
    </citation>
    <scope>NUCLEOTIDE SEQUENCE [LARGE SCALE GENOMIC DNA]</scope>
    <source>
        <strain>LT2 / SGSC1412 / ATCC 700720</strain>
    </source>
</reference>
<protein>
    <recommendedName>
        <fullName evidence="2">S-adenosylmethionine synthase</fullName>
        <shortName evidence="2">AdoMet synthase</shortName>
        <ecNumber evidence="2">2.5.1.6</ecNumber>
    </recommendedName>
    <alternativeName>
        <fullName evidence="2">MAT</fullName>
    </alternativeName>
    <alternativeName>
        <fullName evidence="2">Methionine adenosyltransferase</fullName>
    </alternativeName>
</protein>